<proteinExistence type="evidence at protein level"/>
<feature type="chain" id="PRO_0000360167" description="Putative phosphinothricin acetyltransferase YwnH">
    <location>
        <begin position="1"/>
        <end position="163"/>
    </location>
</feature>
<feature type="domain" description="N-acetyltransferase" evidence="3">
    <location>
        <begin position="1"/>
        <end position="158"/>
    </location>
</feature>
<feature type="binding site" evidence="2">
    <location>
        <begin position="85"/>
        <end position="87"/>
    </location>
    <ligand>
        <name>acetyl-CoA</name>
        <dbReference type="ChEBI" id="CHEBI:57288"/>
    </ligand>
</feature>
<feature type="binding site" evidence="2">
    <location>
        <begin position="94"/>
        <end position="98"/>
    </location>
    <ligand>
        <name>acetyl-CoA</name>
        <dbReference type="ChEBI" id="CHEBI:57288"/>
    </ligand>
</feature>
<feature type="binding site" evidence="2">
    <location>
        <begin position="124"/>
        <end position="126"/>
    </location>
    <ligand>
        <name>acetyl-CoA</name>
        <dbReference type="ChEBI" id="CHEBI:57288"/>
    </ligand>
</feature>
<feature type="strand" evidence="5">
    <location>
        <begin position="2"/>
        <end position="5"/>
    </location>
</feature>
<feature type="helix" evidence="5">
    <location>
        <begin position="8"/>
        <end position="10"/>
    </location>
</feature>
<feature type="helix" evidence="5">
    <location>
        <begin position="11"/>
        <end position="22"/>
    </location>
</feature>
<feature type="turn" evidence="5">
    <location>
        <begin position="23"/>
        <end position="25"/>
    </location>
</feature>
<feature type="helix" evidence="5">
    <location>
        <begin position="36"/>
        <end position="39"/>
    </location>
</feature>
<feature type="helix" evidence="5">
    <location>
        <begin position="40"/>
        <end position="44"/>
    </location>
</feature>
<feature type="strand" evidence="5">
    <location>
        <begin position="48"/>
        <end position="50"/>
    </location>
</feature>
<feature type="strand" evidence="5">
    <location>
        <begin position="52"/>
        <end position="56"/>
    </location>
</feature>
<feature type="strand" evidence="5">
    <location>
        <begin position="62"/>
        <end position="74"/>
    </location>
</feature>
<feature type="helix" evidence="5">
    <location>
        <begin position="75"/>
        <end position="77"/>
    </location>
</feature>
<feature type="strand" evidence="5">
    <location>
        <begin position="80"/>
        <end position="87"/>
    </location>
</feature>
<feature type="helix" evidence="5">
    <location>
        <begin position="89"/>
        <end position="91"/>
    </location>
</feature>
<feature type="strand" evidence="5">
    <location>
        <begin position="93"/>
        <end position="95"/>
    </location>
</feature>
<feature type="helix" evidence="5">
    <location>
        <begin position="96"/>
        <end position="107"/>
    </location>
</feature>
<feature type="helix" evidence="5">
    <location>
        <begin position="108"/>
        <end position="111"/>
    </location>
</feature>
<feature type="strand" evidence="5">
    <location>
        <begin position="114"/>
        <end position="121"/>
    </location>
</feature>
<feature type="helix" evidence="5">
    <location>
        <begin position="125"/>
        <end position="133"/>
    </location>
</feature>
<feature type="strand" evidence="5">
    <location>
        <begin position="137"/>
        <end position="148"/>
    </location>
</feature>
<feature type="strand" evidence="5">
    <location>
        <begin position="151"/>
        <end position="161"/>
    </location>
</feature>
<sequence>MTLRLAEHRDLEAVVAIYNSTIASRMVTADTEPVTPEDRMEWFSGHTESRPLYVAEDENGNVAAWISFETFYGRPAYNKTAEVSIYIDEACRGKGVGSYLLQEALRIAPNLGIRSLMAFIFGHNKPSLKLFEKHGFAEWGLFPGIAEMDGKRYDLKILGRELS</sequence>
<organism>
    <name type="scientific">Bacillus subtilis (strain 168)</name>
    <dbReference type="NCBI Taxonomy" id="224308"/>
    <lineage>
        <taxon>Bacteria</taxon>
        <taxon>Bacillati</taxon>
        <taxon>Bacillota</taxon>
        <taxon>Bacilli</taxon>
        <taxon>Bacillales</taxon>
        <taxon>Bacillaceae</taxon>
        <taxon>Bacillus</taxon>
    </lineage>
</organism>
<gene>
    <name type="primary">ywnH</name>
    <name type="ordered locus">BSU36560</name>
</gene>
<protein>
    <recommendedName>
        <fullName>Putative phosphinothricin acetyltransferase YwnH</fullName>
        <shortName>PPT N-acetyltransferase</shortName>
        <ecNumber>2.3.1.183</ecNumber>
    </recommendedName>
</protein>
<dbReference type="EC" id="2.3.1.183"/>
<dbReference type="EMBL" id="Y08559">
    <property type="protein sequence ID" value="CAA69854.1"/>
    <property type="molecule type" value="Genomic_DNA"/>
</dbReference>
<dbReference type="EMBL" id="AL009126">
    <property type="protein sequence ID" value="CAB15673.1"/>
    <property type="molecule type" value="Genomic_DNA"/>
</dbReference>
<dbReference type="PIR" id="B70064">
    <property type="entry name" value="B70064"/>
</dbReference>
<dbReference type="RefSeq" id="NP_391537.1">
    <property type="nucleotide sequence ID" value="NC_000964.3"/>
</dbReference>
<dbReference type="RefSeq" id="WP_010886629.1">
    <property type="nucleotide sequence ID" value="NZ_OZ025638.1"/>
</dbReference>
<dbReference type="PDB" id="1VHS">
    <property type="method" value="X-ray"/>
    <property type="resolution" value="1.80 A"/>
    <property type="chains" value="A/B=2-163"/>
</dbReference>
<dbReference type="PDBsum" id="1VHS"/>
<dbReference type="SMR" id="P71043"/>
<dbReference type="FunCoup" id="P71043">
    <property type="interactions" value="40"/>
</dbReference>
<dbReference type="STRING" id="224308.BSU36560"/>
<dbReference type="jPOST" id="P71043"/>
<dbReference type="PaxDb" id="224308-BSU36560"/>
<dbReference type="EnsemblBacteria" id="CAB15673">
    <property type="protein sequence ID" value="CAB15673"/>
    <property type="gene ID" value="BSU_36560"/>
</dbReference>
<dbReference type="GeneID" id="936956"/>
<dbReference type="KEGG" id="bsu:BSU36560"/>
<dbReference type="PATRIC" id="fig|224308.43.peg.3830"/>
<dbReference type="eggNOG" id="COG1247">
    <property type="taxonomic scope" value="Bacteria"/>
</dbReference>
<dbReference type="InParanoid" id="P71043"/>
<dbReference type="OrthoDB" id="9798006at2"/>
<dbReference type="PhylomeDB" id="P71043"/>
<dbReference type="BioCyc" id="BSUB:BSU36560-MONOMER"/>
<dbReference type="EvolutionaryTrace" id="P71043"/>
<dbReference type="Proteomes" id="UP000001570">
    <property type="component" value="Chromosome"/>
</dbReference>
<dbReference type="GO" id="GO:0016747">
    <property type="term" value="F:acyltransferase activity, transferring groups other than amino-acyl groups"/>
    <property type="evidence" value="ECO:0000318"/>
    <property type="project" value="GO_Central"/>
</dbReference>
<dbReference type="GO" id="GO:0102971">
    <property type="term" value="F:phosphinothricin N-acetyltransferase activity"/>
    <property type="evidence" value="ECO:0007669"/>
    <property type="project" value="UniProtKB-EC"/>
</dbReference>
<dbReference type="GO" id="GO:0046677">
    <property type="term" value="P:response to antibiotic"/>
    <property type="evidence" value="ECO:0007669"/>
    <property type="project" value="UniProtKB-KW"/>
</dbReference>
<dbReference type="GO" id="GO:0009635">
    <property type="term" value="P:response to herbicide"/>
    <property type="evidence" value="ECO:0007669"/>
    <property type="project" value="UniProtKB-KW"/>
</dbReference>
<dbReference type="CDD" id="cd04301">
    <property type="entry name" value="NAT_SF"/>
    <property type="match status" value="1"/>
</dbReference>
<dbReference type="Gene3D" id="3.40.630.30">
    <property type="match status" value="1"/>
</dbReference>
<dbReference type="InterPro" id="IPR016181">
    <property type="entry name" value="Acyl_CoA_acyltransferase"/>
</dbReference>
<dbReference type="InterPro" id="IPR000182">
    <property type="entry name" value="GNAT_dom"/>
</dbReference>
<dbReference type="PANTHER" id="PTHR43072">
    <property type="entry name" value="N-ACETYLTRANSFERASE"/>
    <property type="match status" value="1"/>
</dbReference>
<dbReference type="PANTHER" id="PTHR43072:SF23">
    <property type="entry name" value="UPF0039 PROTEIN C11D3.02C"/>
    <property type="match status" value="1"/>
</dbReference>
<dbReference type="Pfam" id="PF00583">
    <property type="entry name" value="Acetyltransf_1"/>
    <property type="match status" value="1"/>
</dbReference>
<dbReference type="SUPFAM" id="SSF55729">
    <property type="entry name" value="Acyl-CoA N-acyltransferases (Nat)"/>
    <property type="match status" value="1"/>
</dbReference>
<dbReference type="PROSITE" id="PS51186">
    <property type="entry name" value="GNAT"/>
    <property type="match status" value="1"/>
</dbReference>
<comment type="function">
    <text evidence="1">This enzyme is an effector of phosphinothricin tripeptide (PTT or bialaphos) resistance. Inactivates PTT by transfer of an acetyl group (By similarity).</text>
</comment>
<comment type="catalytic activity">
    <reaction>
        <text>phosphinothricin + acetyl-CoA = N-acetylphosphinothricin + CoA + H(+)</text>
        <dbReference type="Rhea" id="RHEA:12597"/>
        <dbReference type="ChEBI" id="CHEBI:15378"/>
        <dbReference type="ChEBI" id="CHEBI:57287"/>
        <dbReference type="ChEBI" id="CHEBI:57288"/>
        <dbReference type="ChEBI" id="CHEBI:58879"/>
        <dbReference type="ChEBI" id="CHEBI:58882"/>
        <dbReference type="EC" id="2.3.1.183"/>
    </reaction>
</comment>
<comment type="similarity">
    <text evidence="4">Belongs to the acetyltransferase family. PAT/BAR subfamily.</text>
</comment>
<accession>P71043</accession>
<accession>Q795A0</accession>
<reference key="1">
    <citation type="journal article" date="1997" name="J. Bacteriol.">
        <title>The Bacillus subtilis ureABC operon.</title>
        <authorList>
            <person name="Cruz-Ramos H."/>
            <person name="Glaser P."/>
            <person name="Wray L.V. Jr."/>
            <person name="Fisher S.H."/>
        </authorList>
    </citation>
    <scope>NUCLEOTIDE SEQUENCE [GENOMIC DNA]</scope>
    <source>
        <strain>168</strain>
    </source>
</reference>
<reference key="2">
    <citation type="journal article" date="1997" name="Nature">
        <title>The complete genome sequence of the Gram-positive bacterium Bacillus subtilis.</title>
        <authorList>
            <person name="Kunst F."/>
            <person name="Ogasawara N."/>
            <person name="Moszer I."/>
            <person name="Albertini A.M."/>
            <person name="Alloni G."/>
            <person name="Azevedo V."/>
            <person name="Bertero M.G."/>
            <person name="Bessieres P."/>
            <person name="Bolotin A."/>
            <person name="Borchert S."/>
            <person name="Borriss R."/>
            <person name="Boursier L."/>
            <person name="Brans A."/>
            <person name="Braun M."/>
            <person name="Brignell S.C."/>
            <person name="Bron S."/>
            <person name="Brouillet S."/>
            <person name="Bruschi C.V."/>
            <person name="Caldwell B."/>
            <person name="Capuano V."/>
            <person name="Carter N.M."/>
            <person name="Choi S.-K."/>
            <person name="Codani J.-J."/>
            <person name="Connerton I.F."/>
            <person name="Cummings N.J."/>
            <person name="Daniel R.A."/>
            <person name="Denizot F."/>
            <person name="Devine K.M."/>
            <person name="Duesterhoeft A."/>
            <person name="Ehrlich S.D."/>
            <person name="Emmerson P.T."/>
            <person name="Entian K.-D."/>
            <person name="Errington J."/>
            <person name="Fabret C."/>
            <person name="Ferrari E."/>
            <person name="Foulger D."/>
            <person name="Fritz C."/>
            <person name="Fujita M."/>
            <person name="Fujita Y."/>
            <person name="Fuma S."/>
            <person name="Galizzi A."/>
            <person name="Galleron N."/>
            <person name="Ghim S.-Y."/>
            <person name="Glaser P."/>
            <person name="Goffeau A."/>
            <person name="Golightly E.J."/>
            <person name="Grandi G."/>
            <person name="Guiseppi G."/>
            <person name="Guy B.J."/>
            <person name="Haga K."/>
            <person name="Haiech J."/>
            <person name="Harwood C.R."/>
            <person name="Henaut A."/>
            <person name="Hilbert H."/>
            <person name="Holsappel S."/>
            <person name="Hosono S."/>
            <person name="Hullo M.-F."/>
            <person name="Itaya M."/>
            <person name="Jones L.-M."/>
            <person name="Joris B."/>
            <person name="Karamata D."/>
            <person name="Kasahara Y."/>
            <person name="Klaerr-Blanchard M."/>
            <person name="Klein C."/>
            <person name="Kobayashi Y."/>
            <person name="Koetter P."/>
            <person name="Koningstein G."/>
            <person name="Krogh S."/>
            <person name="Kumano M."/>
            <person name="Kurita K."/>
            <person name="Lapidus A."/>
            <person name="Lardinois S."/>
            <person name="Lauber J."/>
            <person name="Lazarevic V."/>
            <person name="Lee S.-M."/>
            <person name="Levine A."/>
            <person name="Liu H."/>
            <person name="Masuda S."/>
            <person name="Mauel C."/>
            <person name="Medigue C."/>
            <person name="Medina N."/>
            <person name="Mellado R.P."/>
            <person name="Mizuno M."/>
            <person name="Moestl D."/>
            <person name="Nakai S."/>
            <person name="Noback M."/>
            <person name="Noone D."/>
            <person name="O'Reilly M."/>
            <person name="Ogawa K."/>
            <person name="Ogiwara A."/>
            <person name="Oudega B."/>
            <person name="Park S.-H."/>
            <person name="Parro V."/>
            <person name="Pohl T.M."/>
            <person name="Portetelle D."/>
            <person name="Porwollik S."/>
            <person name="Prescott A.M."/>
            <person name="Presecan E."/>
            <person name="Pujic P."/>
            <person name="Purnelle B."/>
            <person name="Rapoport G."/>
            <person name="Rey M."/>
            <person name="Reynolds S."/>
            <person name="Rieger M."/>
            <person name="Rivolta C."/>
            <person name="Rocha E."/>
            <person name="Roche B."/>
            <person name="Rose M."/>
            <person name="Sadaie Y."/>
            <person name="Sato T."/>
            <person name="Scanlan E."/>
            <person name="Schleich S."/>
            <person name="Schroeter R."/>
            <person name="Scoffone F."/>
            <person name="Sekiguchi J."/>
            <person name="Sekowska A."/>
            <person name="Seror S.J."/>
            <person name="Serror P."/>
            <person name="Shin B.-S."/>
            <person name="Soldo B."/>
            <person name="Sorokin A."/>
            <person name="Tacconi E."/>
            <person name="Takagi T."/>
            <person name="Takahashi H."/>
            <person name="Takemaru K."/>
            <person name="Takeuchi M."/>
            <person name="Tamakoshi A."/>
            <person name="Tanaka T."/>
            <person name="Terpstra P."/>
            <person name="Tognoni A."/>
            <person name="Tosato V."/>
            <person name="Uchiyama S."/>
            <person name="Vandenbol M."/>
            <person name="Vannier F."/>
            <person name="Vassarotti A."/>
            <person name="Viari A."/>
            <person name="Wambutt R."/>
            <person name="Wedler E."/>
            <person name="Wedler H."/>
            <person name="Weitzenegger T."/>
            <person name="Winters P."/>
            <person name="Wipat A."/>
            <person name="Yamamoto H."/>
            <person name="Yamane K."/>
            <person name="Yasumoto K."/>
            <person name="Yata K."/>
            <person name="Yoshida K."/>
            <person name="Yoshikawa H.-F."/>
            <person name="Zumstein E."/>
            <person name="Yoshikawa H."/>
            <person name="Danchin A."/>
        </authorList>
    </citation>
    <scope>NUCLEOTIDE SEQUENCE [LARGE SCALE GENOMIC DNA]</scope>
    <source>
        <strain>168</strain>
    </source>
</reference>
<reference key="3">
    <citation type="journal article" date="2005" name="Proteins">
        <title>Structural analysis of a set of proteins resulting from a bacterial genomics project.</title>
        <authorList>
            <person name="Badger J."/>
            <person name="Sauder J.M."/>
            <person name="Adams J.M."/>
            <person name="Antonysamy S."/>
            <person name="Bain K."/>
            <person name="Bergseid M.G."/>
            <person name="Buchanan S.G."/>
            <person name="Buchanan M.D."/>
            <person name="Batiyenko Y."/>
            <person name="Christopher J.A."/>
            <person name="Emtage S."/>
            <person name="Eroshkina A."/>
            <person name="Feil I."/>
            <person name="Furlong E.B."/>
            <person name="Gajiwala K.S."/>
            <person name="Gao X."/>
            <person name="He D."/>
            <person name="Hendle J."/>
            <person name="Huber A."/>
            <person name="Hoda K."/>
            <person name="Kearins P."/>
            <person name="Kissinger C."/>
            <person name="Laubert B."/>
            <person name="Lewis H.A."/>
            <person name="Lin J."/>
            <person name="Loomis K."/>
            <person name="Lorimer D."/>
            <person name="Louie G."/>
            <person name="Maletic M."/>
            <person name="Marsh C.D."/>
            <person name="Miller I."/>
            <person name="Molinari J."/>
            <person name="Muller-Dieckmann H.J."/>
            <person name="Newman J.M."/>
            <person name="Noland B.W."/>
            <person name="Pagarigan B."/>
            <person name="Park F."/>
            <person name="Peat T.S."/>
            <person name="Post K.W."/>
            <person name="Radojicic S."/>
            <person name="Ramos A."/>
            <person name="Romero R."/>
            <person name="Rutter M.E."/>
            <person name="Sanderson W.E."/>
            <person name="Schwinn K.D."/>
            <person name="Tresser J."/>
            <person name="Winhoven J."/>
            <person name="Wright T.A."/>
            <person name="Wu L."/>
            <person name="Xu J."/>
            <person name="Harris T.J.R."/>
        </authorList>
    </citation>
    <scope>X-RAY CRYSTALLOGRAPHY (1.80 ANGSTROMS)</scope>
</reference>
<evidence type="ECO:0000250" key="1"/>
<evidence type="ECO:0000255" key="2"/>
<evidence type="ECO:0000255" key="3">
    <source>
        <dbReference type="PROSITE-ProRule" id="PRU00532"/>
    </source>
</evidence>
<evidence type="ECO:0000305" key="4"/>
<evidence type="ECO:0007829" key="5">
    <source>
        <dbReference type="PDB" id="1VHS"/>
    </source>
</evidence>
<name>YWNH_BACSU</name>
<keyword id="KW-0002">3D-structure</keyword>
<keyword id="KW-0012">Acyltransferase</keyword>
<keyword id="KW-0046">Antibiotic resistance</keyword>
<keyword id="KW-0359">Herbicide resistance</keyword>
<keyword id="KW-1185">Reference proteome</keyword>
<keyword id="KW-0808">Transferase</keyword>